<name>MOAA_MYCSJ</name>
<reference key="1">
    <citation type="submission" date="2007-02" db="EMBL/GenBank/DDBJ databases">
        <title>Complete sequence of Mycobacterium sp. JLS.</title>
        <authorList>
            <consortium name="US DOE Joint Genome Institute"/>
            <person name="Copeland A."/>
            <person name="Lucas S."/>
            <person name="Lapidus A."/>
            <person name="Barry K."/>
            <person name="Detter J.C."/>
            <person name="Glavina del Rio T."/>
            <person name="Hammon N."/>
            <person name="Israni S."/>
            <person name="Dalin E."/>
            <person name="Tice H."/>
            <person name="Pitluck S."/>
            <person name="Chain P."/>
            <person name="Malfatti S."/>
            <person name="Shin M."/>
            <person name="Vergez L."/>
            <person name="Schmutz J."/>
            <person name="Larimer F."/>
            <person name="Land M."/>
            <person name="Hauser L."/>
            <person name="Kyrpides N."/>
            <person name="Mikhailova N."/>
            <person name="Miller C.D."/>
            <person name="Anderson A.J."/>
            <person name="Sims R.C."/>
            <person name="Richardson P."/>
        </authorList>
    </citation>
    <scope>NUCLEOTIDE SEQUENCE [LARGE SCALE GENOMIC DNA]</scope>
    <source>
        <strain>JLS</strain>
    </source>
</reference>
<accession>A3Q648</accession>
<comment type="function">
    <text evidence="1">Catalyzes the cyclization of GTP to (8S)-3',8-cyclo-7,8-dihydroguanosine 5'-triphosphate.</text>
</comment>
<comment type="catalytic activity">
    <reaction evidence="1">
        <text>GTP + AH2 + S-adenosyl-L-methionine = (8S)-3',8-cyclo-7,8-dihydroguanosine 5'-triphosphate + 5'-deoxyadenosine + L-methionine + A + H(+)</text>
        <dbReference type="Rhea" id="RHEA:49576"/>
        <dbReference type="ChEBI" id="CHEBI:13193"/>
        <dbReference type="ChEBI" id="CHEBI:15378"/>
        <dbReference type="ChEBI" id="CHEBI:17319"/>
        <dbReference type="ChEBI" id="CHEBI:17499"/>
        <dbReference type="ChEBI" id="CHEBI:37565"/>
        <dbReference type="ChEBI" id="CHEBI:57844"/>
        <dbReference type="ChEBI" id="CHEBI:59789"/>
        <dbReference type="ChEBI" id="CHEBI:131766"/>
        <dbReference type="EC" id="4.1.99.22"/>
    </reaction>
</comment>
<comment type="cofactor">
    <cofactor evidence="1">
        <name>[4Fe-4S] cluster</name>
        <dbReference type="ChEBI" id="CHEBI:49883"/>
    </cofactor>
    <text evidence="1">Binds 2 [4Fe-4S] clusters. Binds 1 [4Fe-4S] cluster coordinated with 3 cysteines and an exchangeable S-adenosyl-L-methionine and 1 [4Fe-4S] cluster coordinated with 3 cysteines and the GTP-derived substrate.</text>
</comment>
<comment type="pathway">
    <text evidence="1">Cofactor biosynthesis; molybdopterin biosynthesis.</text>
</comment>
<comment type="subunit">
    <text evidence="1">Monomer and homodimer.</text>
</comment>
<comment type="similarity">
    <text evidence="1">Belongs to the radical SAM superfamily. MoaA family.</text>
</comment>
<proteinExistence type="inferred from homology"/>
<evidence type="ECO:0000255" key="1">
    <source>
        <dbReference type="HAMAP-Rule" id="MF_01225"/>
    </source>
</evidence>
<evidence type="ECO:0000255" key="2">
    <source>
        <dbReference type="PROSITE-ProRule" id="PRU01266"/>
    </source>
</evidence>
<gene>
    <name evidence="1" type="primary">moaA</name>
    <name type="ordered locus">Mjls_4860</name>
</gene>
<organism>
    <name type="scientific">Mycobacterium sp. (strain JLS)</name>
    <dbReference type="NCBI Taxonomy" id="164757"/>
    <lineage>
        <taxon>Bacteria</taxon>
        <taxon>Bacillati</taxon>
        <taxon>Actinomycetota</taxon>
        <taxon>Actinomycetes</taxon>
        <taxon>Mycobacteriales</taxon>
        <taxon>Mycobacteriaceae</taxon>
        <taxon>Mycobacterium</taxon>
    </lineage>
</organism>
<keyword id="KW-0004">4Fe-4S</keyword>
<keyword id="KW-0342">GTP-binding</keyword>
<keyword id="KW-0408">Iron</keyword>
<keyword id="KW-0411">Iron-sulfur</keyword>
<keyword id="KW-0456">Lyase</keyword>
<keyword id="KW-0479">Metal-binding</keyword>
<keyword id="KW-0501">Molybdenum cofactor biosynthesis</keyword>
<keyword id="KW-0547">Nucleotide-binding</keyword>
<keyword id="KW-0949">S-adenosyl-L-methionine</keyword>
<dbReference type="EC" id="4.1.99.22" evidence="1"/>
<dbReference type="EMBL" id="CP000580">
    <property type="protein sequence ID" value="ABO00626.1"/>
    <property type="molecule type" value="Genomic_DNA"/>
</dbReference>
<dbReference type="SMR" id="A3Q648"/>
<dbReference type="KEGG" id="mjl:Mjls_4860"/>
<dbReference type="HOGENOM" id="CLU_009273_0_1_11"/>
<dbReference type="BioCyc" id="MSP164757:G1G8C-4906-MONOMER"/>
<dbReference type="UniPathway" id="UPA00344"/>
<dbReference type="GO" id="GO:0051539">
    <property type="term" value="F:4 iron, 4 sulfur cluster binding"/>
    <property type="evidence" value="ECO:0007669"/>
    <property type="project" value="UniProtKB-UniRule"/>
</dbReference>
<dbReference type="GO" id="GO:0061799">
    <property type="term" value="F:cyclic pyranopterin monophosphate synthase activity"/>
    <property type="evidence" value="ECO:0007669"/>
    <property type="project" value="TreeGrafter"/>
</dbReference>
<dbReference type="GO" id="GO:0061798">
    <property type="term" value="F:GTP 3',8'-cyclase activity"/>
    <property type="evidence" value="ECO:0007669"/>
    <property type="project" value="UniProtKB-UniRule"/>
</dbReference>
<dbReference type="GO" id="GO:0005525">
    <property type="term" value="F:GTP binding"/>
    <property type="evidence" value="ECO:0007669"/>
    <property type="project" value="UniProtKB-UniRule"/>
</dbReference>
<dbReference type="GO" id="GO:0046872">
    <property type="term" value="F:metal ion binding"/>
    <property type="evidence" value="ECO:0007669"/>
    <property type="project" value="UniProtKB-KW"/>
</dbReference>
<dbReference type="GO" id="GO:1904047">
    <property type="term" value="F:S-adenosyl-L-methionine binding"/>
    <property type="evidence" value="ECO:0007669"/>
    <property type="project" value="UniProtKB-UniRule"/>
</dbReference>
<dbReference type="GO" id="GO:0006777">
    <property type="term" value="P:Mo-molybdopterin cofactor biosynthetic process"/>
    <property type="evidence" value="ECO:0007669"/>
    <property type="project" value="UniProtKB-UniRule"/>
</dbReference>
<dbReference type="CDD" id="cd01335">
    <property type="entry name" value="Radical_SAM"/>
    <property type="match status" value="1"/>
</dbReference>
<dbReference type="CDD" id="cd21117">
    <property type="entry name" value="Twitch_MoaA"/>
    <property type="match status" value="1"/>
</dbReference>
<dbReference type="Gene3D" id="3.20.20.70">
    <property type="entry name" value="Aldolase class I"/>
    <property type="match status" value="1"/>
</dbReference>
<dbReference type="HAMAP" id="MF_01225_B">
    <property type="entry name" value="MoaA_B"/>
    <property type="match status" value="1"/>
</dbReference>
<dbReference type="InterPro" id="IPR013785">
    <property type="entry name" value="Aldolase_TIM"/>
</dbReference>
<dbReference type="InterPro" id="IPR006638">
    <property type="entry name" value="Elp3/MiaA/NifB-like_rSAM"/>
</dbReference>
<dbReference type="InterPro" id="IPR013483">
    <property type="entry name" value="MoaA"/>
</dbReference>
<dbReference type="InterPro" id="IPR000385">
    <property type="entry name" value="MoaA_NifB_PqqE_Fe-S-bd_CS"/>
</dbReference>
<dbReference type="InterPro" id="IPR010505">
    <property type="entry name" value="MoaA_twitch"/>
</dbReference>
<dbReference type="InterPro" id="IPR050105">
    <property type="entry name" value="MoCo_biosynth_MoaA/MoaC"/>
</dbReference>
<dbReference type="InterPro" id="IPR007197">
    <property type="entry name" value="rSAM"/>
</dbReference>
<dbReference type="NCBIfam" id="TIGR02666">
    <property type="entry name" value="moaA"/>
    <property type="match status" value="1"/>
</dbReference>
<dbReference type="PANTHER" id="PTHR22960:SF0">
    <property type="entry name" value="MOLYBDENUM COFACTOR BIOSYNTHESIS PROTEIN 1"/>
    <property type="match status" value="1"/>
</dbReference>
<dbReference type="PANTHER" id="PTHR22960">
    <property type="entry name" value="MOLYBDOPTERIN COFACTOR SYNTHESIS PROTEIN A"/>
    <property type="match status" value="1"/>
</dbReference>
<dbReference type="Pfam" id="PF06463">
    <property type="entry name" value="Mob_synth_C"/>
    <property type="match status" value="1"/>
</dbReference>
<dbReference type="Pfam" id="PF04055">
    <property type="entry name" value="Radical_SAM"/>
    <property type="match status" value="1"/>
</dbReference>
<dbReference type="SFLD" id="SFLDG01383">
    <property type="entry name" value="cyclic_pyranopterin_phosphate"/>
    <property type="match status" value="1"/>
</dbReference>
<dbReference type="SFLD" id="SFLDG01072">
    <property type="entry name" value="dehydrogenase_like"/>
    <property type="match status" value="1"/>
</dbReference>
<dbReference type="SMART" id="SM00729">
    <property type="entry name" value="Elp3"/>
    <property type="match status" value="1"/>
</dbReference>
<dbReference type="SUPFAM" id="SSF102114">
    <property type="entry name" value="Radical SAM enzymes"/>
    <property type="match status" value="1"/>
</dbReference>
<dbReference type="PROSITE" id="PS01305">
    <property type="entry name" value="MOAA_NIFB_PQQE"/>
    <property type="match status" value="1"/>
</dbReference>
<dbReference type="PROSITE" id="PS51918">
    <property type="entry name" value="RADICAL_SAM"/>
    <property type="match status" value="1"/>
</dbReference>
<sequence length="350" mass="37511">MTVTPLGVPTISRPAAGMPTTGPLVDTFGRIATDLRVSLTDRCNLRCTYCMPAEGLDWLPGEQLLSADELIRLLRIAVTRLGITNVRFTGGEPLVVRHLEDVVAATGALRPRPEMAMTTNGIGLAKRARALKAAGLDRVNVSLDSVDAAHFARITRRDRLGDVLAGLAAAKEAGLTPVKVNAVLDPDTGLDDAVSLLRYCLDHGYQLRIIEQMPLDAEHQWQRGRSLEAAGILAALRAHFTLVPDSKPRGSAPAQLWRVDGGTATVGVIASVSEAFCAACDRTRLTADGQVRNCLFAREESDLRRLLRGGADDDAIEQAWRAAMWTKAAGHGINDPGFEQPSRPMSAIGG</sequence>
<protein>
    <recommendedName>
        <fullName evidence="1">GTP 3',8-cyclase</fullName>
        <ecNumber evidence="1">4.1.99.22</ecNumber>
    </recommendedName>
    <alternativeName>
        <fullName evidence="1">Molybdenum cofactor biosynthesis protein A</fullName>
    </alternativeName>
</protein>
<feature type="chain" id="PRO_1000054202" description="GTP 3',8-cyclase">
    <location>
        <begin position="1"/>
        <end position="350"/>
    </location>
</feature>
<feature type="domain" description="Radical SAM core" evidence="2">
    <location>
        <begin position="27"/>
        <end position="245"/>
    </location>
</feature>
<feature type="binding site" evidence="1">
    <location>
        <position position="36"/>
    </location>
    <ligand>
        <name>GTP</name>
        <dbReference type="ChEBI" id="CHEBI:37565"/>
    </ligand>
</feature>
<feature type="binding site" evidence="1">
    <location>
        <position position="43"/>
    </location>
    <ligand>
        <name>[4Fe-4S] cluster</name>
        <dbReference type="ChEBI" id="CHEBI:49883"/>
        <label>1</label>
        <note>4Fe-4S-S-AdoMet</note>
    </ligand>
</feature>
<feature type="binding site" evidence="1">
    <location>
        <position position="47"/>
    </location>
    <ligand>
        <name>[4Fe-4S] cluster</name>
        <dbReference type="ChEBI" id="CHEBI:49883"/>
        <label>1</label>
        <note>4Fe-4S-S-AdoMet</note>
    </ligand>
</feature>
<feature type="binding site" evidence="1">
    <location>
        <position position="49"/>
    </location>
    <ligand>
        <name>S-adenosyl-L-methionine</name>
        <dbReference type="ChEBI" id="CHEBI:59789"/>
    </ligand>
</feature>
<feature type="binding site" evidence="1">
    <location>
        <position position="50"/>
    </location>
    <ligand>
        <name>[4Fe-4S] cluster</name>
        <dbReference type="ChEBI" id="CHEBI:49883"/>
        <label>1</label>
        <note>4Fe-4S-S-AdoMet</note>
    </ligand>
</feature>
<feature type="binding site" evidence="1">
    <location>
        <position position="87"/>
    </location>
    <ligand>
        <name>GTP</name>
        <dbReference type="ChEBI" id="CHEBI:37565"/>
    </ligand>
</feature>
<feature type="binding site" evidence="1">
    <location>
        <position position="91"/>
    </location>
    <ligand>
        <name>S-adenosyl-L-methionine</name>
        <dbReference type="ChEBI" id="CHEBI:59789"/>
    </ligand>
</feature>
<feature type="binding site" evidence="1">
    <location>
        <position position="118"/>
    </location>
    <ligand>
        <name>GTP</name>
        <dbReference type="ChEBI" id="CHEBI:37565"/>
    </ligand>
</feature>
<feature type="binding site" evidence="1">
    <location>
        <position position="142"/>
    </location>
    <ligand>
        <name>S-adenosyl-L-methionine</name>
        <dbReference type="ChEBI" id="CHEBI:59789"/>
    </ligand>
</feature>
<feature type="binding site" evidence="1">
    <location>
        <position position="179"/>
    </location>
    <ligand>
        <name>GTP</name>
        <dbReference type="ChEBI" id="CHEBI:37565"/>
    </ligand>
</feature>
<feature type="binding site" evidence="1">
    <location>
        <position position="213"/>
    </location>
    <ligand>
        <name>S-adenosyl-L-methionine</name>
        <dbReference type="ChEBI" id="CHEBI:59789"/>
    </ligand>
</feature>
<feature type="binding site" evidence="1">
    <location>
        <position position="277"/>
    </location>
    <ligand>
        <name>[4Fe-4S] cluster</name>
        <dbReference type="ChEBI" id="CHEBI:49883"/>
        <label>2</label>
        <note>4Fe-4S-substrate</note>
    </ligand>
</feature>
<feature type="binding site" evidence="1">
    <location>
        <position position="280"/>
    </location>
    <ligand>
        <name>[4Fe-4S] cluster</name>
        <dbReference type="ChEBI" id="CHEBI:49883"/>
        <label>2</label>
        <note>4Fe-4S-substrate</note>
    </ligand>
</feature>
<feature type="binding site" evidence="1">
    <location>
        <begin position="282"/>
        <end position="284"/>
    </location>
    <ligand>
        <name>GTP</name>
        <dbReference type="ChEBI" id="CHEBI:37565"/>
    </ligand>
</feature>
<feature type="binding site" evidence="1">
    <location>
        <position position="294"/>
    </location>
    <ligand>
        <name>[4Fe-4S] cluster</name>
        <dbReference type="ChEBI" id="CHEBI:49883"/>
        <label>2</label>
        <note>4Fe-4S-substrate</note>
    </ligand>
</feature>